<gene>
    <name evidence="1" type="primary">uvrB</name>
    <name type="ordered locus">Xfasm12_1894</name>
</gene>
<name>UVRB_XYLFM</name>
<keyword id="KW-0067">ATP-binding</keyword>
<keyword id="KW-0963">Cytoplasm</keyword>
<keyword id="KW-0227">DNA damage</keyword>
<keyword id="KW-0228">DNA excision</keyword>
<keyword id="KW-0234">DNA repair</keyword>
<keyword id="KW-0267">Excision nuclease</keyword>
<keyword id="KW-0347">Helicase</keyword>
<keyword id="KW-0378">Hydrolase</keyword>
<keyword id="KW-0547">Nucleotide-binding</keyword>
<keyword id="KW-0742">SOS response</keyword>
<sequence length="669" mass="75470">MTGLFQLVSSYSPSGDQPAAVQKLVTNFHAGIAKQVLLGVTGSGKTYTIANVVEQIQKPTLVMAPNKTLAAQLYGEFKAFFPHNAVEYFVSYYDYYQPEAYVPASDTFIEKDSSINEYIEQMRLAATKALLSRSDVLVVATVSAIYGLGAPEDYLSLRLILSLGEHIEQRQLIRHLTELQYTRNELDLVRGSFRVRGEVVDVFPAESEMEALRIELFDGEIESLSLFDPLTGQTVRKLQRFSVYPKTHYATTRERTLSAVDTIKDELKEYLELLYGRNKLVEAQRLAQRTQFDLEMMAEVGYCNGIENYSRHLTGKAPGEPPPTLFDYLPPDALLVIDESHVTIPQIGAMFKGDRSRKETLVEFGFRLPSALDNRPLRFEEWEVRSPRSIYVSATPGSYEFRESAGEVIELLVRPTGLIDPEIEIRPVATQVDDLISQINACIKLGDRVLVTTLTKRMAENLTEYLSEQGIRIRYLHSEIDTVERVEIIRDLRLGKFDVLVGINLLREGLDMPEVSLVAILDADKEGFLRSTSSLIQTIGRAARSVRGRAILYADKVTRSMRAAIDETERRRQKQKEYNAENGIVPKSVVRPISDILEGARDGVEVKSKGKGRRVDEVPADYGALNQAEIAAQMKMLEQQMYQHARDLEFEDAARIRDQIQRLREAGLG</sequence>
<accession>B0U4J3</accession>
<protein>
    <recommendedName>
        <fullName evidence="1">UvrABC system protein B</fullName>
        <shortName evidence="1">Protein UvrB</shortName>
    </recommendedName>
    <alternativeName>
        <fullName evidence="1">Excinuclease ABC subunit B</fullName>
    </alternativeName>
</protein>
<comment type="function">
    <text evidence="1">The UvrABC repair system catalyzes the recognition and processing of DNA lesions. A damage recognition complex composed of 2 UvrA and 2 UvrB subunits scans DNA for abnormalities. Upon binding of the UvrA(2)B(2) complex to a putative damaged site, the DNA wraps around one UvrB monomer. DNA wrap is dependent on ATP binding by UvrB and probably causes local melting of the DNA helix, facilitating insertion of UvrB beta-hairpin between the DNA strands. Then UvrB probes one DNA strand for the presence of a lesion. If a lesion is found the UvrA subunits dissociate and the UvrB-DNA preincision complex is formed. This complex is subsequently bound by UvrC and the second UvrB is released. If no lesion is found, the DNA wraps around the other UvrB subunit that will check the other stand for damage.</text>
</comment>
<comment type="subunit">
    <text evidence="1">Forms a heterotetramer with UvrA during the search for lesions. Interacts with UvrC in an incision complex.</text>
</comment>
<comment type="subcellular location">
    <subcellularLocation>
        <location evidence="1">Cytoplasm</location>
    </subcellularLocation>
</comment>
<comment type="domain">
    <text evidence="1">The beta-hairpin motif is involved in DNA binding.</text>
</comment>
<comment type="similarity">
    <text evidence="1">Belongs to the UvrB family.</text>
</comment>
<dbReference type="EMBL" id="CP000941">
    <property type="protein sequence ID" value="ACA12772.1"/>
    <property type="molecule type" value="Genomic_DNA"/>
</dbReference>
<dbReference type="RefSeq" id="WP_004086393.1">
    <property type="nucleotide sequence ID" value="NC_010513.1"/>
</dbReference>
<dbReference type="SMR" id="B0U4J3"/>
<dbReference type="KEGG" id="xfm:Xfasm12_1894"/>
<dbReference type="HOGENOM" id="CLU_009621_2_1_6"/>
<dbReference type="GO" id="GO:0005737">
    <property type="term" value="C:cytoplasm"/>
    <property type="evidence" value="ECO:0007669"/>
    <property type="project" value="UniProtKB-SubCell"/>
</dbReference>
<dbReference type="GO" id="GO:0009380">
    <property type="term" value="C:excinuclease repair complex"/>
    <property type="evidence" value="ECO:0007669"/>
    <property type="project" value="InterPro"/>
</dbReference>
<dbReference type="GO" id="GO:0005524">
    <property type="term" value="F:ATP binding"/>
    <property type="evidence" value="ECO:0007669"/>
    <property type="project" value="UniProtKB-UniRule"/>
</dbReference>
<dbReference type="GO" id="GO:0016887">
    <property type="term" value="F:ATP hydrolysis activity"/>
    <property type="evidence" value="ECO:0007669"/>
    <property type="project" value="InterPro"/>
</dbReference>
<dbReference type="GO" id="GO:0003677">
    <property type="term" value="F:DNA binding"/>
    <property type="evidence" value="ECO:0007669"/>
    <property type="project" value="UniProtKB-UniRule"/>
</dbReference>
<dbReference type="GO" id="GO:0009381">
    <property type="term" value="F:excinuclease ABC activity"/>
    <property type="evidence" value="ECO:0007669"/>
    <property type="project" value="UniProtKB-UniRule"/>
</dbReference>
<dbReference type="GO" id="GO:0004386">
    <property type="term" value="F:helicase activity"/>
    <property type="evidence" value="ECO:0007669"/>
    <property type="project" value="UniProtKB-KW"/>
</dbReference>
<dbReference type="GO" id="GO:0006289">
    <property type="term" value="P:nucleotide-excision repair"/>
    <property type="evidence" value="ECO:0007669"/>
    <property type="project" value="UniProtKB-UniRule"/>
</dbReference>
<dbReference type="GO" id="GO:0009432">
    <property type="term" value="P:SOS response"/>
    <property type="evidence" value="ECO:0007669"/>
    <property type="project" value="UniProtKB-UniRule"/>
</dbReference>
<dbReference type="CDD" id="cd17916">
    <property type="entry name" value="DEXHc_UvrB"/>
    <property type="match status" value="1"/>
</dbReference>
<dbReference type="CDD" id="cd18790">
    <property type="entry name" value="SF2_C_UvrB"/>
    <property type="match status" value="1"/>
</dbReference>
<dbReference type="FunFam" id="3.40.50.300:FF:000477">
    <property type="entry name" value="UvrABC system protein B"/>
    <property type="match status" value="1"/>
</dbReference>
<dbReference type="Gene3D" id="3.40.50.300">
    <property type="entry name" value="P-loop containing nucleotide triphosphate hydrolases"/>
    <property type="match status" value="3"/>
</dbReference>
<dbReference type="Gene3D" id="4.10.860.10">
    <property type="entry name" value="UVR domain"/>
    <property type="match status" value="1"/>
</dbReference>
<dbReference type="HAMAP" id="MF_00204">
    <property type="entry name" value="UvrB"/>
    <property type="match status" value="1"/>
</dbReference>
<dbReference type="InterPro" id="IPR006935">
    <property type="entry name" value="Helicase/UvrB_N"/>
</dbReference>
<dbReference type="InterPro" id="IPR014001">
    <property type="entry name" value="Helicase_ATP-bd"/>
</dbReference>
<dbReference type="InterPro" id="IPR001650">
    <property type="entry name" value="Helicase_C-like"/>
</dbReference>
<dbReference type="InterPro" id="IPR027417">
    <property type="entry name" value="P-loop_NTPase"/>
</dbReference>
<dbReference type="InterPro" id="IPR001943">
    <property type="entry name" value="UVR_dom"/>
</dbReference>
<dbReference type="InterPro" id="IPR036876">
    <property type="entry name" value="UVR_dom_sf"/>
</dbReference>
<dbReference type="InterPro" id="IPR004807">
    <property type="entry name" value="UvrB"/>
</dbReference>
<dbReference type="InterPro" id="IPR041471">
    <property type="entry name" value="UvrB_inter"/>
</dbReference>
<dbReference type="InterPro" id="IPR024759">
    <property type="entry name" value="UvrB_YAD/RRR_dom"/>
</dbReference>
<dbReference type="NCBIfam" id="NF003673">
    <property type="entry name" value="PRK05298.1"/>
    <property type="match status" value="1"/>
</dbReference>
<dbReference type="NCBIfam" id="TIGR00631">
    <property type="entry name" value="uvrb"/>
    <property type="match status" value="1"/>
</dbReference>
<dbReference type="PANTHER" id="PTHR24029">
    <property type="entry name" value="UVRABC SYSTEM PROTEIN B"/>
    <property type="match status" value="1"/>
</dbReference>
<dbReference type="PANTHER" id="PTHR24029:SF0">
    <property type="entry name" value="UVRABC SYSTEM PROTEIN B"/>
    <property type="match status" value="1"/>
</dbReference>
<dbReference type="Pfam" id="PF00271">
    <property type="entry name" value="Helicase_C"/>
    <property type="match status" value="1"/>
</dbReference>
<dbReference type="Pfam" id="PF04851">
    <property type="entry name" value="ResIII"/>
    <property type="match status" value="1"/>
</dbReference>
<dbReference type="Pfam" id="PF02151">
    <property type="entry name" value="UVR"/>
    <property type="match status" value="1"/>
</dbReference>
<dbReference type="Pfam" id="PF12344">
    <property type="entry name" value="UvrB"/>
    <property type="match status" value="1"/>
</dbReference>
<dbReference type="Pfam" id="PF17757">
    <property type="entry name" value="UvrB_inter"/>
    <property type="match status" value="1"/>
</dbReference>
<dbReference type="SMART" id="SM00487">
    <property type="entry name" value="DEXDc"/>
    <property type="match status" value="1"/>
</dbReference>
<dbReference type="SMART" id="SM00490">
    <property type="entry name" value="HELICc"/>
    <property type="match status" value="1"/>
</dbReference>
<dbReference type="SUPFAM" id="SSF46600">
    <property type="entry name" value="C-terminal UvrC-binding domain of UvrB"/>
    <property type="match status" value="1"/>
</dbReference>
<dbReference type="SUPFAM" id="SSF52540">
    <property type="entry name" value="P-loop containing nucleoside triphosphate hydrolases"/>
    <property type="match status" value="2"/>
</dbReference>
<dbReference type="PROSITE" id="PS51192">
    <property type="entry name" value="HELICASE_ATP_BIND_1"/>
    <property type="match status" value="1"/>
</dbReference>
<dbReference type="PROSITE" id="PS51194">
    <property type="entry name" value="HELICASE_CTER"/>
    <property type="match status" value="1"/>
</dbReference>
<dbReference type="PROSITE" id="PS50151">
    <property type="entry name" value="UVR"/>
    <property type="match status" value="1"/>
</dbReference>
<proteinExistence type="inferred from homology"/>
<reference key="1">
    <citation type="journal article" date="2010" name="J. Bacteriol.">
        <title>Whole genome sequences of two Xylella fastidiosa strains (M12 and M23) causing almond leaf scorch disease in California.</title>
        <authorList>
            <person name="Chen J."/>
            <person name="Xie G."/>
            <person name="Han S."/>
            <person name="Chertkov O."/>
            <person name="Sims D."/>
            <person name="Civerolo E.L."/>
        </authorList>
    </citation>
    <scope>NUCLEOTIDE SEQUENCE [LARGE SCALE GENOMIC DNA]</scope>
    <source>
        <strain>M12</strain>
    </source>
</reference>
<evidence type="ECO:0000255" key="1">
    <source>
        <dbReference type="HAMAP-Rule" id="MF_00204"/>
    </source>
</evidence>
<organism>
    <name type="scientific">Xylella fastidiosa (strain M12)</name>
    <dbReference type="NCBI Taxonomy" id="405440"/>
    <lineage>
        <taxon>Bacteria</taxon>
        <taxon>Pseudomonadati</taxon>
        <taxon>Pseudomonadota</taxon>
        <taxon>Gammaproteobacteria</taxon>
        <taxon>Lysobacterales</taxon>
        <taxon>Lysobacteraceae</taxon>
        <taxon>Xylella</taxon>
    </lineage>
</organism>
<feature type="chain" id="PRO_1000099580" description="UvrABC system protein B">
    <location>
        <begin position="1"/>
        <end position="669"/>
    </location>
</feature>
<feature type="domain" description="Helicase ATP-binding" evidence="1">
    <location>
        <begin position="26"/>
        <end position="183"/>
    </location>
</feature>
<feature type="domain" description="Helicase C-terminal" evidence="1">
    <location>
        <begin position="431"/>
        <end position="597"/>
    </location>
</feature>
<feature type="domain" description="UVR" evidence="1">
    <location>
        <begin position="631"/>
        <end position="666"/>
    </location>
</feature>
<feature type="short sequence motif" description="Beta-hairpin">
    <location>
        <begin position="92"/>
        <end position="115"/>
    </location>
</feature>
<feature type="binding site" evidence="1">
    <location>
        <begin position="39"/>
        <end position="46"/>
    </location>
    <ligand>
        <name>ATP</name>
        <dbReference type="ChEBI" id="CHEBI:30616"/>
    </ligand>
</feature>